<proteinExistence type="inferred from homology"/>
<comment type="function">
    <text evidence="1">Catalyzes the dephosphorylation of undecaprenyl diphosphate (UPP). Confers resistance to bacitracin.</text>
</comment>
<comment type="catalytic activity">
    <reaction evidence="1">
        <text>di-trans,octa-cis-undecaprenyl diphosphate + H2O = di-trans,octa-cis-undecaprenyl phosphate + phosphate + H(+)</text>
        <dbReference type="Rhea" id="RHEA:28094"/>
        <dbReference type="ChEBI" id="CHEBI:15377"/>
        <dbReference type="ChEBI" id="CHEBI:15378"/>
        <dbReference type="ChEBI" id="CHEBI:43474"/>
        <dbReference type="ChEBI" id="CHEBI:58405"/>
        <dbReference type="ChEBI" id="CHEBI:60392"/>
        <dbReference type="EC" id="3.6.1.27"/>
    </reaction>
</comment>
<comment type="subcellular location">
    <subcellularLocation>
        <location evidence="1">Cell inner membrane</location>
        <topology evidence="1">Multi-pass membrane protein</topology>
    </subcellularLocation>
</comment>
<comment type="miscellaneous">
    <text>Bacitracin is thought to be involved in the inhibition of peptidoglycan synthesis by sequestering undecaprenyl diphosphate, thereby reducing the pool of lipid carrier available.</text>
</comment>
<comment type="similarity">
    <text evidence="1">Belongs to the UppP family.</text>
</comment>
<gene>
    <name evidence="1" type="primary">uppP</name>
    <name type="synonym">bacA</name>
    <name type="ordered locus">NATL1_09201</name>
</gene>
<name>UPPP_PROM1</name>
<accession>A2C1W8</accession>
<feature type="chain" id="PRO_0000290749" description="Undecaprenyl-diphosphatase">
    <location>
        <begin position="1"/>
        <end position="279"/>
    </location>
</feature>
<feature type="transmembrane region" description="Helical" evidence="1">
    <location>
        <begin position="10"/>
        <end position="30"/>
    </location>
</feature>
<feature type="transmembrane region" description="Helical" evidence="1">
    <location>
        <begin position="48"/>
        <end position="68"/>
    </location>
</feature>
<feature type="transmembrane region" description="Helical" evidence="1">
    <location>
        <begin position="96"/>
        <end position="116"/>
    </location>
</feature>
<feature type="transmembrane region" description="Helical" evidence="1">
    <location>
        <begin position="128"/>
        <end position="148"/>
    </location>
</feature>
<feature type="transmembrane region" description="Helical" evidence="1">
    <location>
        <begin position="203"/>
        <end position="223"/>
    </location>
</feature>
<feature type="transmembrane region" description="Helical" evidence="1">
    <location>
        <begin position="229"/>
        <end position="249"/>
    </location>
</feature>
<feature type="transmembrane region" description="Helical" evidence="1">
    <location>
        <begin position="259"/>
        <end position="279"/>
    </location>
</feature>
<evidence type="ECO:0000255" key="1">
    <source>
        <dbReference type="HAMAP-Rule" id="MF_01006"/>
    </source>
</evidence>
<keyword id="KW-0046">Antibiotic resistance</keyword>
<keyword id="KW-0997">Cell inner membrane</keyword>
<keyword id="KW-1003">Cell membrane</keyword>
<keyword id="KW-0133">Cell shape</keyword>
<keyword id="KW-0961">Cell wall biogenesis/degradation</keyword>
<keyword id="KW-0378">Hydrolase</keyword>
<keyword id="KW-0472">Membrane</keyword>
<keyword id="KW-0573">Peptidoglycan synthesis</keyword>
<keyword id="KW-0812">Transmembrane</keyword>
<keyword id="KW-1133">Transmembrane helix</keyword>
<protein>
    <recommendedName>
        <fullName evidence="1">Undecaprenyl-diphosphatase</fullName>
        <ecNumber evidence="1">3.6.1.27</ecNumber>
    </recommendedName>
    <alternativeName>
        <fullName evidence="1">Bacitracin resistance protein</fullName>
    </alternativeName>
    <alternativeName>
        <fullName evidence="1">Undecaprenyl pyrophosphate phosphatase</fullName>
    </alternativeName>
</protein>
<reference key="1">
    <citation type="journal article" date="2007" name="PLoS Genet.">
        <title>Patterns and implications of gene gain and loss in the evolution of Prochlorococcus.</title>
        <authorList>
            <person name="Kettler G.C."/>
            <person name="Martiny A.C."/>
            <person name="Huang K."/>
            <person name="Zucker J."/>
            <person name="Coleman M.L."/>
            <person name="Rodrigue S."/>
            <person name="Chen F."/>
            <person name="Lapidus A."/>
            <person name="Ferriera S."/>
            <person name="Johnson J."/>
            <person name="Steglich C."/>
            <person name="Church G.M."/>
            <person name="Richardson P."/>
            <person name="Chisholm S.W."/>
        </authorList>
    </citation>
    <scope>NUCLEOTIDE SEQUENCE [LARGE SCALE GENOMIC DNA]</scope>
    <source>
        <strain>NATL1A</strain>
    </source>
</reference>
<organism>
    <name type="scientific">Prochlorococcus marinus (strain NATL1A)</name>
    <dbReference type="NCBI Taxonomy" id="167555"/>
    <lineage>
        <taxon>Bacteria</taxon>
        <taxon>Bacillati</taxon>
        <taxon>Cyanobacteriota</taxon>
        <taxon>Cyanophyceae</taxon>
        <taxon>Synechococcales</taxon>
        <taxon>Prochlorococcaceae</taxon>
        <taxon>Prochlorococcus</taxon>
    </lineage>
</organism>
<sequence>MPEEISQYLFICFKSFFLGIIQGFTEFLPISSTAHLKVVPYLFGWNDLGVSFSASIQLGSAVAIIYYFRNQISLIINSFFSSFNPSKGFKDENSRLFIYIFVASIPILVFGLLIKLYWPNYSDSNLRGLFSIAITSIVMSLLLALSEIYGKRNKLFVDINLNDVIKLGLAQSLALFPGVSRSGITLTSALFSGIERKTAARLSFLVGIPAVSISGLVELFSLFRVLSVIDIIPIIIGIISSFFSSIFAIDLFLKFLSKNNTLVFVYYRLAFGIFILTTL</sequence>
<dbReference type="EC" id="3.6.1.27" evidence="1"/>
<dbReference type="EMBL" id="CP000553">
    <property type="protein sequence ID" value="ABM75478.1"/>
    <property type="molecule type" value="Genomic_DNA"/>
</dbReference>
<dbReference type="RefSeq" id="WP_011823615.1">
    <property type="nucleotide sequence ID" value="NC_008819.1"/>
</dbReference>
<dbReference type="SMR" id="A2C1W8"/>
<dbReference type="KEGG" id="pme:NATL1_09201"/>
<dbReference type="eggNOG" id="COG1968">
    <property type="taxonomic scope" value="Bacteria"/>
</dbReference>
<dbReference type="HOGENOM" id="CLU_060296_1_0_3"/>
<dbReference type="Proteomes" id="UP000002592">
    <property type="component" value="Chromosome"/>
</dbReference>
<dbReference type="GO" id="GO:0005886">
    <property type="term" value="C:plasma membrane"/>
    <property type="evidence" value="ECO:0007669"/>
    <property type="project" value="UniProtKB-SubCell"/>
</dbReference>
<dbReference type="GO" id="GO:0050380">
    <property type="term" value="F:undecaprenyl-diphosphatase activity"/>
    <property type="evidence" value="ECO:0007669"/>
    <property type="project" value="UniProtKB-UniRule"/>
</dbReference>
<dbReference type="GO" id="GO:0071555">
    <property type="term" value="P:cell wall organization"/>
    <property type="evidence" value="ECO:0007669"/>
    <property type="project" value="UniProtKB-KW"/>
</dbReference>
<dbReference type="GO" id="GO:0009252">
    <property type="term" value="P:peptidoglycan biosynthetic process"/>
    <property type="evidence" value="ECO:0007669"/>
    <property type="project" value="UniProtKB-KW"/>
</dbReference>
<dbReference type="GO" id="GO:0008360">
    <property type="term" value="P:regulation of cell shape"/>
    <property type="evidence" value="ECO:0007669"/>
    <property type="project" value="UniProtKB-KW"/>
</dbReference>
<dbReference type="GO" id="GO:0046677">
    <property type="term" value="P:response to antibiotic"/>
    <property type="evidence" value="ECO:0007669"/>
    <property type="project" value="UniProtKB-UniRule"/>
</dbReference>
<dbReference type="HAMAP" id="MF_01006">
    <property type="entry name" value="Undec_diphosphatase"/>
    <property type="match status" value="1"/>
</dbReference>
<dbReference type="InterPro" id="IPR003824">
    <property type="entry name" value="UppP"/>
</dbReference>
<dbReference type="NCBIfam" id="NF001394">
    <property type="entry name" value="PRK00281.2-5"/>
    <property type="match status" value="1"/>
</dbReference>
<dbReference type="NCBIfam" id="TIGR00753">
    <property type="entry name" value="undec_PP_bacA"/>
    <property type="match status" value="1"/>
</dbReference>
<dbReference type="PANTHER" id="PTHR30622">
    <property type="entry name" value="UNDECAPRENYL-DIPHOSPHATASE"/>
    <property type="match status" value="1"/>
</dbReference>
<dbReference type="PANTHER" id="PTHR30622:SF4">
    <property type="entry name" value="UNDECAPRENYL-DIPHOSPHATASE"/>
    <property type="match status" value="1"/>
</dbReference>
<dbReference type="Pfam" id="PF02673">
    <property type="entry name" value="BacA"/>
    <property type="match status" value="1"/>
</dbReference>